<comment type="function">
    <text evidence="1 2 6">Mediates sodium- and chloride-dependent transport of norepinephrine (also known as noradrenaline), the primary signaling neurotransmitter in the autonomic sympathetic nervous system (PubMed:8150077). Is responsible for norepinephrine re-uptake and clearance from the synaptic cleft, thus playing a crucial role in norepinephrine inactivation and homeostasis (By similarity). Can also mediate sodium- and chloride-dependent transport of dopamine (By similarity).</text>
</comment>
<comment type="catalytic activity">
    <reaction evidence="6">
        <text>(R)-noradrenaline(out) + chloride(out) + Na(+)(out) = (R)-noradrenaline(in) + chloride(in) + Na(+)(in)</text>
        <dbReference type="Rhea" id="RHEA:70923"/>
        <dbReference type="ChEBI" id="CHEBI:17996"/>
        <dbReference type="ChEBI" id="CHEBI:29101"/>
        <dbReference type="ChEBI" id="CHEBI:72587"/>
    </reaction>
</comment>
<comment type="catalytic activity">
    <reaction evidence="2">
        <text>dopamine(out) + chloride(out) + Na(+)(out) = dopamine(in) + chloride(in) + Na(+)(in)</text>
        <dbReference type="Rhea" id="RHEA:70919"/>
        <dbReference type="ChEBI" id="CHEBI:17996"/>
        <dbReference type="ChEBI" id="CHEBI:29101"/>
        <dbReference type="ChEBI" id="CHEBI:59905"/>
    </reaction>
</comment>
<comment type="catalytic activity">
    <reaction evidence="2">
        <text>dopamine(out) + chloride(out) + 2 Na(+)(out) = dopamine(in) + chloride(in) + 2 Na(+)(in)</text>
        <dbReference type="Rhea" id="RHEA:70931"/>
        <dbReference type="ChEBI" id="CHEBI:17996"/>
        <dbReference type="ChEBI" id="CHEBI:29101"/>
        <dbReference type="ChEBI" id="CHEBI:59905"/>
    </reaction>
</comment>
<comment type="activity regulation">
    <text evidence="6">Inhibited by nisoxetine, oxaprotiline and desipramin.</text>
</comment>
<comment type="biophysicochemical properties">
    <kinetics>
        <KM evidence="6">200 nM for noradrenaline</KM>
    </kinetics>
</comment>
<comment type="subunit">
    <text evidence="2">Monomer. Can form homodimers in the cell membrane; homodimerization is mostly mediated by cholesterol and lipids, and regulates neurotransmitter transport activity. Interacts with PRKCABP.</text>
</comment>
<comment type="subcellular location">
    <subcellularLocation>
        <location evidence="2">Cell membrane</location>
        <topology evidence="4">Multi-pass membrane protein</topology>
    </subcellularLocation>
    <subcellularLocation>
        <location evidence="1">Cell projection</location>
        <location evidence="1">Axon</location>
    </subcellularLocation>
    <subcellularLocation>
        <location evidence="1">Synapse</location>
        <location evidence="1">Synaptosome</location>
    </subcellularLocation>
</comment>
<comment type="PTM">
    <text evidence="2">Palmitoylated. Palmitoylation regulates protein levels and neurotransmitter transport.</text>
</comment>
<comment type="similarity">
    <text evidence="8">Belongs to the sodium:neurotransmitter symporter (SNF) (TC 2.A.22) family. SLC6A2 subfamily.</text>
</comment>
<dbReference type="EMBL" id="X79015">
    <property type="protein sequence ID" value="CAA55645.1"/>
    <property type="molecule type" value="mRNA"/>
</dbReference>
<dbReference type="EMBL" id="U09198">
    <property type="protein sequence ID" value="AAA82153.1"/>
    <property type="molecule type" value="mRNA"/>
</dbReference>
<dbReference type="PIR" id="I55651">
    <property type="entry name" value="I55651"/>
</dbReference>
<dbReference type="PIR" id="S43285">
    <property type="entry name" value="S43285"/>
</dbReference>
<dbReference type="RefSeq" id="NP_777033.1">
    <property type="nucleotide sequence ID" value="NM_174608.2"/>
</dbReference>
<dbReference type="SMR" id="P51143"/>
<dbReference type="FunCoup" id="P51143">
    <property type="interactions" value="144"/>
</dbReference>
<dbReference type="STRING" id="9913.ENSBTAP00000064756"/>
<dbReference type="BindingDB" id="P51143"/>
<dbReference type="GlyCosmos" id="P51143">
    <property type="glycosylation" value="3 sites, No reported glycans"/>
</dbReference>
<dbReference type="GlyGen" id="P51143">
    <property type="glycosylation" value="3 sites"/>
</dbReference>
<dbReference type="PaxDb" id="9913-ENSBTAP00000004354"/>
<dbReference type="GeneID" id="282363"/>
<dbReference type="KEGG" id="bta:282363"/>
<dbReference type="CTD" id="6530"/>
<dbReference type="eggNOG" id="KOG3659">
    <property type="taxonomic scope" value="Eukaryota"/>
</dbReference>
<dbReference type="InParanoid" id="P51143"/>
<dbReference type="OrthoDB" id="6581954at2759"/>
<dbReference type="Proteomes" id="UP000009136">
    <property type="component" value="Unplaced"/>
</dbReference>
<dbReference type="GO" id="GO:0030424">
    <property type="term" value="C:axon"/>
    <property type="evidence" value="ECO:0000318"/>
    <property type="project" value="GO_Central"/>
</dbReference>
<dbReference type="GO" id="GO:0032809">
    <property type="term" value="C:neuronal cell body membrane"/>
    <property type="evidence" value="ECO:0000318"/>
    <property type="project" value="GO_Central"/>
</dbReference>
<dbReference type="GO" id="GO:0005886">
    <property type="term" value="C:plasma membrane"/>
    <property type="evidence" value="ECO:0000318"/>
    <property type="project" value="GO_Central"/>
</dbReference>
<dbReference type="GO" id="GO:0042734">
    <property type="term" value="C:presynaptic membrane"/>
    <property type="evidence" value="ECO:0000318"/>
    <property type="project" value="GO_Central"/>
</dbReference>
<dbReference type="GO" id="GO:0005330">
    <property type="term" value="F:dopamine:sodium symporter activity"/>
    <property type="evidence" value="ECO:0000318"/>
    <property type="project" value="GO_Central"/>
</dbReference>
<dbReference type="GO" id="GO:0046872">
    <property type="term" value="F:metal ion binding"/>
    <property type="evidence" value="ECO:0007669"/>
    <property type="project" value="UniProtKB-KW"/>
</dbReference>
<dbReference type="GO" id="GO:0005328">
    <property type="term" value="F:neurotransmitter:sodium symporter activity"/>
    <property type="evidence" value="ECO:0007669"/>
    <property type="project" value="InterPro"/>
</dbReference>
<dbReference type="GO" id="GO:0005334">
    <property type="term" value="F:norepinephrine:sodium symporter activity"/>
    <property type="evidence" value="ECO:0000314"/>
    <property type="project" value="UniProtKB"/>
</dbReference>
<dbReference type="GO" id="GO:0006865">
    <property type="term" value="P:amino acid transport"/>
    <property type="evidence" value="ECO:0000318"/>
    <property type="project" value="GO_Central"/>
</dbReference>
<dbReference type="GO" id="GO:0051583">
    <property type="term" value="P:dopamine uptake involved in synaptic transmission"/>
    <property type="evidence" value="ECO:0000318"/>
    <property type="project" value="GO_Central"/>
</dbReference>
<dbReference type="GO" id="GO:0015874">
    <property type="term" value="P:norepinephrine transport"/>
    <property type="evidence" value="ECO:0000318"/>
    <property type="project" value="GO_Central"/>
</dbReference>
<dbReference type="GO" id="GO:0035725">
    <property type="term" value="P:sodium ion transmembrane transport"/>
    <property type="evidence" value="ECO:0000318"/>
    <property type="project" value="GO_Central"/>
</dbReference>
<dbReference type="InterPro" id="IPR000175">
    <property type="entry name" value="Na/ntran_symport"/>
</dbReference>
<dbReference type="InterPro" id="IPR002435">
    <property type="entry name" value="Na/ntran_symport_noradrenaline"/>
</dbReference>
<dbReference type="InterPro" id="IPR037272">
    <property type="entry name" value="SNS_sf"/>
</dbReference>
<dbReference type="NCBIfam" id="NF037979">
    <property type="entry name" value="Na_transp"/>
    <property type="match status" value="1"/>
</dbReference>
<dbReference type="PANTHER" id="PTHR11616:SF320">
    <property type="entry name" value="SODIUM-DEPENDENT NORADRENALINE TRANSPORTER"/>
    <property type="match status" value="1"/>
</dbReference>
<dbReference type="PANTHER" id="PTHR11616">
    <property type="entry name" value="SODIUM/CHLORIDE DEPENDENT TRANSPORTER"/>
    <property type="match status" value="1"/>
</dbReference>
<dbReference type="Pfam" id="PF00209">
    <property type="entry name" value="SNF"/>
    <property type="match status" value="1"/>
</dbReference>
<dbReference type="PRINTS" id="PR00176">
    <property type="entry name" value="NANEUSMPORT"/>
</dbReference>
<dbReference type="PRINTS" id="PR01201">
    <property type="entry name" value="NORTRANSPORT"/>
</dbReference>
<dbReference type="SUPFAM" id="SSF161070">
    <property type="entry name" value="SNF-like"/>
    <property type="match status" value="1"/>
</dbReference>
<dbReference type="PROSITE" id="PS00610">
    <property type="entry name" value="NA_NEUROTRAN_SYMP_1"/>
    <property type="match status" value="1"/>
</dbReference>
<dbReference type="PROSITE" id="PS00754">
    <property type="entry name" value="NA_NEUROTRAN_SYMP_2"/>
    <property type="match status" value="1"/>
</dbReference>
<dbReference type="PROSITE" id="PS50267">
    <property type="entry name" value="NA_NEUROTRAN_SYMP_3"/>
    <property type="match status" value="1"/>
</dbReference>
<name>SC6A2_BOVIN</name>
<gene>
    <name type="primary">SLC6A2</name>
    <name type="synonym">NORADR</name>
</gene>
<organism>
    <name type="scientific">Bos taurus</name>
    <name type="common">Bovine</name>
    <dbReference type="NCBI Taxonomy" id="9913"/>
    <lineage>
        <taxon>Eukaryota</taxon>
        <taxon>Metazoa</taxon>
        <taxon>Chordata</taxon>
        <taxon>Craniata</taxon>
        <taxon>Vertebrata</taxon>
        <taxon>Euteleostomi</taxon>
        <taxon>Mammalia</taxon>
        <taxon>Eutheria</taxon>
        <taxon>Laurasiatheria</taxon>
        <taxon>Artiodactyla</taxon>
        <taxon>Ruminantia</taxon>
        <taxon>Pecora</taxon>
        <taxon>Bovidae</taxon>
        <taxon>Bovinae</taxon>
        <taxon>Bos</taxon>
    </lineage>
</organism>
<protein>
    <recommendedName>
        <fullName evidence="7">Sodium-dependent noradrenaline transporter</fullName>
    </recommendedName>
    <alternativeName>
        <fullName>Norepinephrine transporter</fullName>
        <shortName>NET</shortName>
    </alternativeName>
    <alternativeName>
        <fullName>Solute carrier family 6 member 2</fullName>
    </alternativeName>
</protein>
<reference key="1">
    <citation type="journal article" date="1994" name="FEBS Lett.">
        <title>Cloning and expression of the bovine sodium- and chloride-dependent noradrenaline transporter.</title>
        <authorList>
            <person name="Lingen B."/>
            <person name="Bruess M."/>
            <person name="Boenisch H."/>
        </authorList>
    </citation>
    <scope>NUCLEOTIDE SEQUENCE [MRNA]</scope>
    <scope>FUNCTION</scope>
    <scope>TRANSPORTER ACTIVITY</scope>
    <scope>BIOPHYSICOCHEMICAL PROPERTIES</scope>
    <scope>ACTIVITY REGULATION</scope>
    <source>
        <tissue>Adrenal medulla</tissue>
    </source>
</reference>
<reference key="2">
    <citation type="journal article" date="1994" name="J. Exp. Biol.">
        <title>Structure, function and brain localization of neurotransmitter transporters.</title>
        <authorList>
            <person name="Jursky F."/>
            <person name="Tamura S."/>
            <person name="Tamura A."/>
            <person name="Mandiyan S."/>
            <person name="Nelson H."/>
            <person name="Nelson N."/>
        </authorList>
    </citation>
    <scope>NUCLEOTIDE SEQUENCE [MRNA]</scope>
    <source>
        <tissue>Adrenal medulla</tissue>
    </source>
</reference>
<sequence length="615" mass="68900">MLLARMNPQVQPENGGAGPGSEQPPRKRKEVLVVKERNGVQCLLASRDGDEQPRETWGKKIDFLLSVVGFAVDLANVWRFPYLCYKNGGGAFLIPYTLFLIIAGMPLFYMELALGQYNREGAATVWKICPFFKGVGYAVILIALYVGFYYNVIIAWSLYYLFSSFTPTLPWTDCGHAWNSPNCTDPKLLNSSVLGNHTKYSKYKFTPAAEFYERGVLHLHESSGIHDIGLPQWQLLLCLIIVVIVLFFSLWKGVKTSGKVVWITATLPYLVLFVLLVHGITLPGASNGINAYLHIDFYRLKEATVWIDAATQIFFSLGAGFGVLIAFASYNKFDNNCYRDALLTSTINCVTSFISGFAIFSILGYMAHEHKVNIEDVATEGAGLVFILYPEAISTLSGSTFWAIVFFIMLLALGIDSSMGGMEAVITGLADDFQVLKRHRKLFTFAVSFGTFLLALFCITKGGIYVLTLLDTFAAGTSILFAVLMEAIGVSWFYGVDRFSNDIQQMMGFKPGLYWRLCWKFVSPAFLLFVVIVSIINFKPLTYDDYIFPLWANWVGWGIAGSSMVLVPAYIVYKFFSTRGSIRERLAYGITPASEHHLVAQRDIRQFQLQHWLAI</sequence>
<evidence type="ECO:0000250" key="1">
    <source>
        <dbReference type="UniProtKB" id="O55192"/>
    </source>
</evidence>
<evidence type="ECO:0000250" key="2">
    <source>
        <dbReference type="UniProtKB" id="P23975"/>
    </source>
</evidence>
<evidence type="ECO:0000250" key="3">
    <source>
        <dbReference type="UniProtKB" id="Q7K4Y6"/>
    </source>
</evidence>
<evidence type="ECO:0000255" key="4"/>
<evidence type="ECO:0000256" key="5">
    <source>
        <dbReference type="SAM" id="MobiDB-lite"/>
    </source>
</evidence>
<evidence type="ECO:0000269" key="6">
    <source>
    </source>
</evidence>
<evidence type="ECO:0000303" key="7">
    <source>
    </source>
</evidence>
<evidence type="ECO:0000305" key="8"/>
<proteinExistence type="evidence at protein level"/>
<feature type="chain" id="PRO_0000214747" description="Sodium-dependent noradrenaline transporter">
    <location>
        <begin position="1"/>
        <end position="615"/>
    </location>
</feature>
<feature type="topological domain" description="Cytoplasmic" evidence="3">
    <location>
        <begin position="1"/>
        <end position="60"/>
    </location>
</feature>
<feature type="transmembrane region" description="Helical; Name=1" evidence="3">
    <location>
        <begin position="61"/>
        <end position="86"/>
    </location>
</feature>
<feature type="topological domain" description="Extracellular" evidence="3">
    <location>
        <begin position="87"/>
        <end position="90"/>
    </location>
</feature>
<feature type="transmembrane region" description="Helical; Name=2" evidence="3">
    <location>
        <begin position="91"/>
        <end position="114"/>
    </location>
</feature>
<feature type="topological domain" description="Cytoplasmic" evidence="3">
    <location>
        <begin position="115"/>
        <end position="133"/>
    </location>
</feature>
<feature type="transmembrane region" description="Helical; Name=3" evidence="3">
    <location>
        <begin position="134"/>
        <end position="164"/>
    </location>
</feature>
<feature type="topological domain" description="Extracellular" evidence="3">
    <location>
        <begin position="165"/>
        <end position="231"/>
    </location>
</feature>
<feature type="transmembrane region" description="Helical; Name=4" evidence="3">
    <location>
        <begin position="232"/>
        <end position="252"/>
    </location>
</feature>
<feature type="topological domain" description="Cytoplasmic" evidence="3">
    <location>
        <begin position="253"/>
        <end position="255"/>
    </location>
</feature>
<feature type="transmembrane region" description="Helical; Name=5" evidence="3">
    <location>
        <begin position="256"/>
        <end position="280"/>
    </location>
</feature>
<feature type="topological domain" description="Extracellular" evidence="3">
    <location>
        <begin position="281"/>
        <end position="304"/>
    </location>
</feature>
<feature type="transmembrane region" description="Helical; Name=6" evidence="3">
    <location>
        <begin position="305"/>
        <end position="330"/>
    </location>
</feature>
<feature type="topological domain" description="Cytoplasmic" evidence="3">
    <location>
        <begin position="331"/>
        <end position="336"/>
    </location>
</feature>
<feature type="transmembrane region" description="Helical; Name=7" evidence="3">
    <location>
        <begin position="337"/>
        <end position="360"/>
    </location>
</feature>
<feature type="topological domain" description="Extracellular" evidence="3">
    <location>
        <begin position="361"/>
        <end position="400"/>
    </location>
</feature>
<feature type="transmembrane region" description="Helical; Name=8" evidence="3">
    <location>
        <begin position="401"/>
        <end position="426"/>
    </location>
</feature>
<feature type="topological domain" description="Cytoplasmic" evidence="3">
    <location>
        <begin position="427"/>
        <end position="441"/>
    </location>
</feature>
<feature type="transmembrane region" description="Helical; Name=9" evidence="3">
    <location>
        <begin position="442"/>
        <end position="462"/>
    </location>
</feature>
<feature type="topological domain" description="Extracellular" evidence="3">
    <location>
        <position position="463"/>
    </location>
</feature>
<feature type="transmembrane region" description="Helical; Name=10" evidence="3">
    <location>
        <begin position="464"/>
        <end position="490"/>
    </location>
</feature>
<feature type="topological domain" description="Cytoplasmic" evidence="3">
    <location>
        <begin position="491"/>
        <end position="520"/>
    </location>
</feature>
<feature type="transmembrane region" description="Helical; Name=11" evidence="3">
    <location>
        <begin position="521"/>
        <end position="543"/>
    </location>
</feature>
<feature type="topological domain" description="Extracellular" evidence="3">
    <location>
        <begin position="544"/>
        <end position="546"/>
    </location>
</feature>
<feature type="transmembrane region" description="Helical; Name=12" evidence="3">
    <location>
        <begin position="547"/>
        <end position="567"/>
    </location>
</feature>
<feature type="topological domain" description="Cytoplasmic" evidence="3">
    <location>
        <begin position="568"/>
        <end position="615"/>
    </location>
</feature>
<feature type="region of interest" description="Disordered" evidence="5">
    <location>
        <begin position="1"/>
        <end position="28"/>
    </location>
</feature>
<feature type="binding site" evidence="2">
    <location>
        <position position="69"/>
    </location>
    <ligand>
        <name>Na(+)</name>
        <dbReference type="ChEBI" id="CHEBI:29101"/>
        <label>1</label>
    </ligand>
</feature>
<feature type="binding site" evidence="2">
    <location>
        <position position="71"/>
    </location>
    <ligand>
        <name>Na(+)</name>
        <dbReference type="ChEBI" id="CHEBI:29101"/>
        <label>2</label>
    </ligand>
</feature>
<feature type="binding site" evidence="2">
    <location>
        <position position="72"/>
    </location>
    <ligand>
        <name>Na(+)</name>
        <dbReference type="ChEBI" id="CHEBI:29101"/>
        <label>1</label>
    </ligand>
</feature>
<feature type="binding site" evidence="2">
    <location>
        <position position="73"/>
    </location>
    <ligand>
        <name>(R)-noradrenaline</name>
        <dbReference type="ChEBI" id="CHEBI:72587"/>
        <label>1</label>
    </ligand>
</feature>
<feature type="binding site" evidence="2">
    <location>
        <position position="73"/>
    </location>
    <ligand>
        <name>dopamine</name>
        <dbReference type="ChEBI" id="CHEBI:59905"/>
        <label>1</label>
    </ligand>
</feature>
<feature type="binding site" evidence="2">
    <location>
        <position position="76"/>
    </location>
    <ligand>
        <name>Na(+)</name>
        <dbReference type="ChEBI" id="CHEBI:29101"/>
        <label>2</label>
    </ligand>
</feature>
<feature type="binding site" evidence="2">
    <location>
        <position position="85"/>
    </location>
    <ligand>
        <name>(R)-noradrenaline</name>
        <dbReference type="ChEBI" id="CHEBI:72587"/>
        <label>2</label>
    </ligand>
</feature>
<feature type="binding site" evidence="2">
    <location>
        <position position="86"/>
    </location>
    <ligand>
        <name>(R)-noradrenaline</name>
        <dbReference type="ChEBI" id="CHEBI:72587"/>
        <label>2</label>
    </ligand>
</feature>
<feature type="binding site" evidence="2">
    <location>
        <position position="143"/>
    </location>
    <ligand>
        <name>(R)-noradrenaline</name>
        <dbReference type="ChEBI" id="CHEBI:72587"/>
        <label>1</label>
    </ligand>
</feature>
<feature type="binding site" evidence="2">
    <location>
        <position position="143"/>
    </location>
    <ligand>
        <name>dopamine</name>
        <dbReference type="ChEBI" id="CHEBI:59905"/>
        <label>1</label>
    </ligand>
</feature>
<feature type="binding site" evidence="2">
    <location>
        <position position="147"/>
    </location>
    <ligand>
        <name>(R)-noradrenaline</name>
        <dbReference type="ChEBI" id="CHEBI:72587"/>
        <label>1</label>
    </ligand>
</feature>
<feature type="binding site" evidence="2">
    <location>
        <position position="315"/>
    </location>
    <ligand>
        <name>(R)-noradrenaline</name>
        <dbReference type="ChEBI" id="CHEBI:72587"/>
        <label>1</label>
    </ligand>
</feature>
<feature type="binding site" evidence="2">
    <location>
        <position position="315"/>
    </location>
    <ligand>
        <name>dopamine</name>
        <dbReference type="ChEBI" id="CHEBI:59905"/>
        <label>1</label>
    </ligand>
</feature>
<feature type="binding site" evidence="2">
    <location>
        <position position="316"/>
    </location>
    <ligand>
        <name>Na(+)</name>
        <dbReference type="ChEBI" id="CHEBI:29101"/>
        <label>2</label>
    </ligand>
</feature>
<feature type="binding site" evidence="2">
    <location>
        <position position="348"/>
    </location>
    <ligand>
        <name>Na(+)</name>
        <dbReference type="ChEBI" id="CHEBI:29101"/>
        <label>2</label>
    </ligand>
</feature>
<feature type="binding site" evidence="2">
    <location>
        <position position="380"/>
    </location>
    <ligand>
        <name>(R)-noradrenaline</name>
        <dbReference type="ChEBI" id="CHEBI:72587"/>
        <label>2</label>
    </ligand>
</feature>
<feature type="binding site" evidence="2">
    <location>
        <position position="380"/>
    </location>
    <ligand>
        <name>dopamine</name>
        <dbReference type="ChEBI" id="CHEBI:59905"/>
        <label>2</label>
    </ligand>
</feature>
<feature type="binding site" evidence="2">
    <location>
        <position position="416"/>
    </location>
    <ligand>
        <name>Na(+)</name>
        <dbReference type="ChEBI" id="CHEBI:29101"/>
        <label>1</label>
    </ligand>
</feature>
<feature type="binding site" evidence="2">
    <location>
        <position position="417"/>
    </location>
    <ligand>
        <name>Na(+)</name>
        <dbReference type="ChEBI" id="CHEBI:29101"/>
        <label>1</label>
    </ligand>
</feature>
<feature type="glycosylation site" description="N-linked (GlcNAc...) asparagine" evidence="4">
    <location>
        <position position="182"/>
    </location>
</feature>
<feature type="glycosylation site" description="N-linked (GlcNAc...) asparagine" evidence="4">
    <location>
        <position position="190"/>
    </location>
</feature>
<feature type="glycosylation site" description="N-linked (GlcNAc...) asparagine" evidence="4">
    <location>
        <position position="196"/>
    </location>
</feature>
<feature type="disulfide bond" evidence="2">
    <location>
        <begin position="174"/>
        <end position="183"/>
    </location>
</feature>
<feature type="sequence conflict" description="In Ref. 2; AAA82153." evidence="8" ref="2">
    <original>V</original>
    <variation>L</variation>
    <location>
        <position position="72"/>
    </location>
</feature>
<feature type="sequence conflict" description="In Ref. 2; AAA82153." evidence="8" ref="2">
    <original>D</original>
    <variation>V</variation>
    <location>
        <position position="544"/>
    </location>
</feature>
<feature type="sequence conflict" description="In Ref. 2; AAA82153." evidence="8" ref="2">
    <original>RLAYGITPASEHHLVAQRDIRQFQLQHWLAI</original>
    <variation>MQMRQRRRGPANSCQISC</variation>
    <location>
        <begin position="585"/>
        <end position="615"/>
    </location>
</feature>
<keyword id="KW-1003">Cell membrane</keyword>
<keyword id="KW-0966">Cell projection</keyword>
<keyword id="KW-1015">Disulfide bond</keyword>
<keyword id="KW-0325">Glycoprotein</keyword>
<keyword id="KW-0449">Lipoprotein</keyword>
<keyword id="KW-0472">Membrane</keyword>
<keyword id="KW-0479">Metal-binding</keyword>
<keyword id="KW-0532">Neurotransmitter transport</keyword>
<keyword id="KW-0564">Palmitate</keyword>
<keyword id="KW-1185">Reference proteome</keyword>
<keyword id="KW-0915">Sodium</keyword>
<keyword id="KW-0769">Symport</keyword>
<keyword id="KW-0770">Synapse</keyword>
<keyword id="KW-0771">Synaptosome</keyword>
<keyword id="KW-0812">Transmembrane</keyword>
<keyword id="KW-1133">Transmembrane helix</keyword>
<keyword id="KW-0813">Transport</keyword>
<accession>P51143</accession>